<sequence>MFSLIGAKRQAIGIAALAWSTGAVMASEHWPDLPVGIKNGAAARIGNMAYVGLGSAGTDFYALDLNNPSKGWVKRANFIGPATNGAAMAAAGGKIFAFSGNGKATPDAKSPIIFDTAYVYDPGSDGWSKLDTQTPVGLSGAKAVGLADGRIAIFGGYNKELFDKYLADVGAIDKDKEPEAYRKLVDSYMGMKPEAYRWNDEVLVYDPAGNNWGSLGANPFLPNCDPAMATMGEGDFLLVSGGIKPGLRTPEAKLVKIRDGAAHWQKVSDLPPLSSSEPQEGVAGAYAGKAGDDVLVAGGANFKGAQANAAAGKWFAHDGLAKSWRDDVYAFDGKDWKVAGKLPRGLAYGAAFDAPGGLLVVGGEDRDGKARKEVFLLKWDGKALSVEN</sequence>
<comment type="function">
    <text evidence="1">Converts alpha-N-acetylneuranimic acid (Neu5Ac) to the beta-anomer, accelerating the equilibrium between the alpha- and beta-anomers. Probably facilitates sialidase-negative bacteria to compete successfully for limited amounts of extracellular Neu5Ac, which is likely taken up in the beta-anomer. In addition, the rapid removal of sialic acid from solution might be advantageous to the bacterium to damp down host responses.</text>
</comment>
<comment type="catalytic activity">
    <reaction evidence="1">
        <text>N-acetyl-alpha-neuraminate = N-acetyl-beta-neuraminate</text>
        <dbReference type="Rhea" id="RHEA:25233"/>
        <dbReference type="ChEBI" id="CHEBI:58705"/>
        <dbReference type="ChEBI" id="CHEBI:58770"/>
        <dbReference type="EC" id="5.1.3.24"/>
    </reaction>
</comment>
<comment type="subunit">
    <text evidence="1">Homodimer.</text>
</comment>
<comment type="subcellular location">
    <subcellularLocation>
        <location evidence="1">Periplasm</location>
    </subcellularLocation>
</comment>
<comment type="similarity">
    <text evidence="1">Belongs to the NanM family.</text>
</comment>
<comment type="caution">
    <text evidence="2">Lacks the conserved Glu residue in position 242, which is expected to be an active site residue.</text>
</comment>
<dbReference type="EC" id="5.1.3.24" evidence="1"/>
<dbReference type="EMBL" id="CP000912">
    <property type="protein sequence ID" value="ABY39416.1"/>
    <property type="molecule type" value="Genomic_DNA"/>
</dbReference>
<dbReference type="RefSeq" id="WP_006073529.1">
    <property type="nucleotide sequence ID" value="NC_010167.1"/>
</dbReference>
<dbReference type="SMR" id="A9WYA0"/>
<dbReference type="KEGG" id="bmt:BSUIS_B0415"/>
<dbReference type="HOGENOM" id="CLU_061535_0_0_5"/>
<dbReference type="Proteomes" id="UP000008545">
    <property type="component" value="Chromosome II"/>
</dbReference>
<dbReference type="GO" id="GO:0042597">
    <property type="term" value="C:periplasmic space"/>
    <property type="evidence" value="ECO:0007669"/>
    <property type="project" value="UniProtKB-SubCell"/>
</dbReference>
<dbReference type="GO" id="GO:0016857">
    <property type="term" value="F:racemase and epimerase activity, acting on carbohydrates and derivatives"/>
    <property type="evidence" value="ECO:0007669"/>
    <property type="project" value="UniProtKB-UniRule"/>
</dbReference>
<dbReference type="Gene3D" id="2.120.10.80">
    <property type="entry name" value="Kelch-type beta propeller"/>
    <property type="match status" value="2"/>
</dbReference>
<dbReference type="HAMAP" id="MF_01195">
    <property type="entry name" value="NanM"/>
    <property type="match status" value="1"/>
</dbReference>
<dbReference type="InterPro" id="IPR015915">
    <property type="entry name" value="Kelch-typ_b-propeller"/>
</dbReference>
<dbReference type="InterPro" id="IPR056734">
    <property type="entry name" value="NANM"/>
</dbReference>
<dbReference type="InterPro" id="IPR019936">
    <property type="entry name" value="NanM_proteobact"/>
</dbReference>
<dbReference type="NCBIfam" id="TIGR03547">
    <property type="entry name" value="muta_rot_YjhT"/>
    <property type="match status" value="1"/>
</dbReference>
<dbReference type="NCBIfam" id="NF010730">
    <property type="entry name" value="PRK14131.1"/>
    <property type="match status" value="1"/>
</dbReference>
<dbReference type="PANTHER" id="PTHR45632:SF3">
    <property type="entry name" value="KELCH-LIKE PROTEIN 32"/>
    <property type="match status" value="1"/>
</dbReference>
<dbReference type="PANTHER" id="PTHR45632">
    <property type="entry name" value="LD33804P"/>
    <property type="match status" value="1"/>
</dbReference>
<dbReference type="Pfam" id="PF24996">
    <property type="entry name" value="NANM"/>
    <property type="match status" value="1"/>
</dbReference>
<dbReference type="SUPFAM" id="SSF117281">
    <property type="entry name" value="Kelch motif"/>
    <property type="match status" value="1"/>
</dbReference>
<gene>
    <name evidence="1" type="primary">nanM</name>
    <name type="ordered locus">BSUIS_B0415</name>
</gene>
<organism>
    <name type="scientific">Brucella suis (strain ATCC 23445 / NCTC 10510)</name>
    <dbReference type="NCBI Taxonomy" id="470137"/>
    <lineage>
        <taxon>Bacteria</taxon>
        <taxon>Pseudomonadati</taxon>
        <taxon>Pseudomonadota</taxon>
        <taxon>Alphaproteobacteria</taxon>
        <taxon>Hyphomicrobiales</taxon>
        <taxon>Brucellaceae</taxon>
        <taxon>Brucella/Ochrobactrum group</taxon>
        <taxon>Brucella</taxon>
    </lineage>
</organism>
<evidence type="ECO:0000255" key="1">
    <source>
        <dbReference type="HAMAP-Rule" id="MF_01195"/>
    </source>
</evidence>
<evidence type="ECO:0000305" key="2"/>
<accession>A9WYA0</accession>
<feature type="signal peptide" evidence="1">
    <location>
        <begin position="1"/>
        <end position="26"/>
    </location>
</feature>
<feature type="chain" id="PRO_0000333052" description="N-acetylneuraminate epimerase">
    <location>
        <begin position="27"/>
        <end position="388"/>
    </location>
</feature>
<feature type="repeat" description="Kelch 1">
    <location>
        <begin position="48"/>
        <end position="92"/>
    </location>
</feature>
<feature type="repeat" description="Kelch 2">
    <location>
        <begin position="94"/>
        <end position="147"/>
    </location>
</feature>
<feature type="repeat" description="Kelch 3">
    <location>
        <begin position="149"/>
        <end position="186"/>
    </location>
</feature>
<feature type="repeat" description="Kelch 4">
    <location>
        <begin position="187"/>
        <end position="232"/>
    </location>
</feature>
<feature type="repeat" description="Kelch 5">
    <location>
        <begin position="236"/>
        <end position="285"/>
    </location>
</feature>
<feature type="repeat" description="Kelch 6">
    <location>
        <begin position="307"/>
        <end position="356"/>
    </location>
</feature>
<feature type="repeat" description="Kelch 7">
    <location>
        <begin position="358"/>
        <end position="387"/>
    </location>
</feature>
<name>NANM_BRUSI</name>
<proteinExistence type="inferred from homology"/>
<protein>
    <recommendedName>
        <fullName evidence="1">N-acetylneuraminate epimerase</fullName>
        <ecNumber evidence="1">5.1.3.24</ecNumber>
    </recommendedName>
    <alternativeName>
        <fullName evidence="1">N-acetylneuraminate mutarotase</fullName>
        <shortName evidence="1">Neu5Ac mutarotase</shortName>
    </alternativeName>
    <alternativeName>
        <fullName evidence="1">Sialic acid epimerase</fullName>
    </alternativeName>
</protein>
<reference key="1">
    <citation type="submission" date="2007-12" db="EMBL/GenBank/DDBJ databases">
        <title>Brucella suis ATCC 23445 whole genome shotgun sequencing project.</title>
        <authorList>
            <person name="Setubal J.C."/>
            <person name="Bowns C."/>
            <person name="Boyle S."/>
            <person name="Crasta O.R."/>
            <person name="Czar M.J."/>
            <person name="Dharmanolla C."/>
            <person name="Gillespie J.J."/>
            <person name="Kenyon R.W."/>
            <person name="Lu J."/>
            <person name="Mane S."/>
            <person name="Mohapatra S."/>
            <person name="Nagrani S."/>
            <person name="Purkayastha A."/>
            <person name="Rajasimha H.K."/>
            <person name="Shallom J.M."/>
            <person name="Shallom S."/>
            <person name="Shukla M."/>
            <person name="Snyder E.E."/>
            <person name="Sobral B.W."/>
            <person name="Wattam A.R."/>
            <person name="Will R."/>
            <person name="Williams K."/>
            <person name="Yoo H."/>
            <person name="Bruce D."/>
            <person name="Detter C."/>
            <person name="Munk C."/>
            <person name="Brettin T.S."/>
        </authorList>
    </citation>
    <scope>NUCLEOTIDE SEQUENCE [LARGE SCALE GENOMIC DNA]</scope>
    <source>
        <strain>ATCC 23445 / NCTC 10510</strain>
    </source>
</reference>
<keyword id="KW-0119">Carbohydrate metabolism</keyword>
<keyword id="KW-0413">Isomerase</keyword>
<keyword id="KW-0880">Kelch repeat</keyword>
<keyword id="KW-0574">Periplasm</keyword>
<keyword id="KW-0677">Repeat</keyword>
<keyword id="KW-0732">Signal</keyword>